<name>GLGA_BACC4</name>
<protein>
    <recommendedName>
        <fullName evidence="1">Glycogen synthase</fullName>
        <ecNumber evidence="1">2.4.1.21</ecNumber>
    </recommendedName>
    <alternativeName>
        <fullName evidence="1">Starch [bacterial glycogen] synthase</fullName>
    </alternativeName>
</protein>
<feature type="chain" id="PRO_1000126055" description="Glycogen synthase">
    <location>
        <begin position="1"/>
        <end position="476"/>
    </location>
</feature>
<feature type="binding site" evidence="1">
    <location>
        <position position="15"/>
    </location>
    <ligand>
        <name>ADP-alpha-D-glucose</name>
        <dbReference type="ChEBI" id="CHEBI:57498"/>
    </ligand>
</feature>
<organism>
    <name type="scientific">Bacillus cereus (strain B4264)</name>
    <dbReference type="NCBI Taxonomy" id="405532"/>
    <lineage>
        <taxon>Bacteria</taxon>
        <taxon>Bacillati</taxon>
        <taxon>Bacillota</taxon>
        <taxon>Bacilli</taxon>
        <taxon>Bacillales</taxon>
        <taxon>Bacillaceae</taxon>
        <taxon>Bacillus</taxon>
        <taxon>Bacillus cereus group</taxon>
    </lineage>
</organism>
<sequence length="476" mass="55021">MNILFAVSECVPFVKSGGLADVAGALPKELKKLGVDVRIILPNYSLIPQKLRDGCTLHKVINVPLGWRNQYCGILKGEQDGITYYLIDNEYYFKRDSLYGHYDDGERFSYFSKAVLECIPHLDFEVDVLHSHDWHTAMVNFLLREKYQDNPLYERIKTVYTIHNLQFQGVFPPEVMYDLLELGDEYFHSKQLEFYGNVNFMKGGIIASDQITAVSPTYKEEIQYEFFGEKLDGLLRKYNDKLSGIVNGIDTSVYNPETDSYIKAQYDAESLYEKSENKRALQRYFGLPEKEDTPIISMVTRLTKQKGLDLVRTVFREIMEEDVQCIILGSGDSEYEQFFEWMAYEYPEKVKVYIGFNEELAHQVYAGSDLFLMPSLFEPCGLGQLIALAYGTIPIVRETGGLNDTVHSYDEETGEGNGFSFTNFNAHDMLHTIHRAIEFYHDKPVWEQLVKQAMTEDYSWEQSALAYKELYKSLME</sequence>
<dbReference type="EC" id="2.4.1.21" evidence="1"/>
<dbReference type="EMBL" id="CP001176">
    <property type="protein sequence ID" value="ACK60513.1"/>
    <property type="molecule type" value="Genomic_DNA"/>
</dbReference>
<dbReference type="RefSeq" id="WP_012593360.1">
    <property type="nucleotide sequence ID" value="NC_011725.1"/>
</dbReference>
<dbReference type="SMR" id="B7HBC4"/>
<dbReference type="CAZy" id="GT5">
    <property type="family name" value="Glycosyltransferase Family 5"/>
</dbReference>
<dbReference type="KEGG" id="bcb:BCB4264_A4996"/>
<dbReference type="HOGENOM" id="CLU_009583_18_2_9"/>
<dbReference type="UniPathway" id="UPA00164"/>
<dbReference type="Proteomes" id="UP000007096">
    <property type="component" value="Chromosome"/>
</dbReference>
<dbReference type="GO" id="GO:0009011">
    <property type="term" value="F:alpha-1,4-glucan glucosyltransferase (ADP-glucose donor) activity"/>
    <property type="evidence" value="ECO:0007669"/>
    <property type="project" value="UniProtKB-UniRule"/>
</dbReference>
<dbReference type="GO" id="GO:0004373">
    <property type="term" value="F:alpha-1,4-glucan glucosyltransferase (UDP-glucose donor) activity"/>
    <property type="evidence" value="ECO:0007669"/>
    <property type="project" value="InterPro"/>
</dbReference>
<dbReference type="GO" id="GO:0005978">
    <property type="term" value="P:glycogen biosynthetic process"/>
    <property type="evidence" value="ECO:0007669"/>
    <property type="project" value="UniProtKB-UniRule"/>
</dbReference>
<dbReference type="CDD" id="cd03791">
    <property type="entry name" value="GT5_Glycogen_synthase_DULL1-like"/>
    <property type="match status" value="1"/>
</dbReference>
<dbReference type="FunFam" id="3.40.50.2000:FF:000175">
    <property type="entry name" value="Glycogen synthase"/>
    <property type="match status" value="1"/>
</dbReference>
<dbReference type="Gene3D" id="3.40.50.2000">
    <property type="entry name" value="Glycogen Phosphorylase B"/>
    <property type="match status" value="2"/>
</dbReference>
<dbReference type="HAMAP" id="MF_00484">
    <property type="entry name" value="Glycogen_synth"/>
    <property type="match status" value="1"/>
</dbReference>
<dbReference type="InterPro" id="IPR001296">
    <property type="entry name" value="Glyco_trans_1"/>
</dbReference>
<dbReference type="InterPro" id="IPR011835">
    <property type="entry name" value="GS/SS"/>
</dbReference>
<dbReference type="InterPro" id="IPR013534">
    <property type="entry name" value="Starch_synth_cat_dom"/>
</dbReference>
<dbReference type="NCBIfam" id="TIGR02095">
    <property type="entry name" value="glgA"/>
    <property type="match status" value="1"/>
</dbReference>
<dbReference type="NCBIfam" id="NF001898">
    <property type="entry name" value="PRK00654.1-1"/>
    <property type="match status" value="1"/>
</dbReference>
<dbReference type="NCBIfam" id="NF001899">
    <property type="entry name" value="PRK00654.1-2"/>
    <property type="match status" value="1"/>
</dbReference>
<dbReference type="PANTHER" id="PTHR45825:SF11">
    <property type="entry name" value="ALPHA AMYLASE DOMAIN-CONTAINING PROTEIN"/>
    <property type="match status" value="1"/>
</dbReference>
<dbReference type="PANTHER" id="PTHR45825">
    <property type="entry name" value="GRANULE-BOUND STARCH SYNTHASE 1, CHLOROPLASTIC/AMYLOPLASTIC"/>
    <property type="match status" value="1"/>
</dbReference>
<dbReference type="Pfam" id="PF08323">
    <property type="entry name" value="Glyco_transf_5"/>
    <property type="match status" value="1"/>
</dbReference>
<dbReference type="Pfam" id="PF00534">
    <property type="entry name" value="Glycos_transf_1"/>
    <property type="match status" value="1"/>
</dbReference>
<dbReference type="SUPFAM" id="SSF53756">
    <property type="entry name" value="UDP-Glycosyltransferase/glycogen phosphorylase"/>
    <property type="match status" value="1"/>
</dbReference>
<comment type="function">
    <text evidence="1">Synthesizes alpha-1,4-glucan chains using ADP-glucose.</text>
</comment>
<comment type="catalytic activity">
    <reaction evidence="1">
        <text>[(1-&gt;4)-alpha-D-glucosyl](n) + ADP-alpha-D-glucose = [(1-&gt;4)-alpha-D-glucosyl](n+1) + ADP + H(+)</text>
        <dbReference type="Rhea" id="RHEA:18189"/>
        <dbReference type="Rhea" id="RHEA-COMP:9584"/>
        <dbReference type="Rhea" id="RHEA-COMP:9587"/>
        <dbReference type="ChEBI" id="CHEBI:15378"/>
        <dbReference type="ChEBI" id="CHEBI:15444"/>
        <dbReference type="ChEBI" id="CHEBI:57498"/>
        <dbReference type="ChEBI" id="CHEBI:456216"/>
        <dbReference type="EC" id="2.4.1.21"/>
    </reaction>
</comment>
<comment type="pathway">
    <text evidence="1">Glycan biosynthesis; glycogen biosynthesis.</text>
</comment>
<comment type="similarity">
    <text evidence="1">Belongs to the glycosyltransferase 1 family. Bacterial/plant glycogen synthase subfamily.</text>
</comment>
<reference key="1">
    <citation type="submission" date="2008-10" db="EMBL/GenBank/DDBJ databases">
        <title>Genome sequence of Bacillus cereus B4264.</title>
        <authorList>
            <person name="Dodson R.J."/>
            <person name="Durkin A.S."/>
            <person name="Rosovitz M.J."/>
            <person name="Rasko D.A."/>
            <person name="Hoffmaster A."/>
            <person name="Ravel J."/>
            <person name="Sutton G."/>
        </authorList>
    </citation>
    <scope>NUCLEOTIDE SEQUENCE [LARGE SCALE GENOMIC DNA]</scope>
    <source>
        <strain>B4264</strain>
    </source>
</reference>
<proteinExistence type="inferred from homology"/>
<gene>
    <name evidence="1" type="primary">glgA</name>
    <name type="ordered locus">BCB4264_A4996</name>
</gene>
<accession>B7HBC4</accession>
<keyword id="KW-0320">Glycogen biosynthesis</keyword>
<keyword id="KW-0328">Glycosyltransferase</keyword>
<keyword id="KW-0808">Transferase</keyword>
<evidence type="ECO:0000255" key="1">
    <source>
        <dbReference type="HAMAP-Rule" id="MF_00484"/>
    </source>
</evidence>